<reference key="1">
    <citation type="journal article" date="2004" name="J. Biol. Chem.">
        <title>2-aminoethoxydiphenyl borate is a common activator of TRPV1, TRPV2, and TRPV3.</title>
        <authorList>
            <person name="Hu H.Z."/>
            <person name="Gu Q."/>
            <person name="Wang C."/>
            <person name="Colton C.K."/>
            <person name="Tang J."/>
            <person name="Kinoshita-Kawada M."/>
            <person name="Lee L.Y."/>
            <person name="Wood J.D."/>
            <person name="Zhu M.X."/>
        </authorList>
    </citation>
    <scope>NUCLEOTIDE SEQUENCE [MRNA] (ISOFORMS 1 AND 2)</scope>
    <scope>FUNCTION</scope>
    <scope>SUBCELLULAR LOCATION</scope>
    <scope>TRANSPORTER ACTIVITY</scope>
    <source>
        <strain>C57BL/6J</strain>
    </source>
</reference>
<reference key="2">
    <citation type="submission" date="2004-01" db="EMBL/GenBank/DDBJ databases">
        <authorList>
            <person name="McIntyre P."/>
        </authorList>
    </citation>
    <scope>NUCLEOTIDE SEQUENCE [MRNA] (ISOFORM 1)</scope>
    <source>
        <strain>C57BL/6J</strain>
        <tissue>Spinal ganglion</tissue>
    </source>
</reference>
<reference key="3">
    <citation type="submission" date="2004-05" db="EMBL/GenBank/DDBJ databases">
        <authorList>
            <person name="Ogawa S."/>
            <person name="Sugiura A."/>
            <person name="Pang C."/>
            <person name="Shinjo K."/>
        </authorList>
    </citation>
    <scope>NUCLEOTIDE SEQUENCE [MRNA] (ISOFORM 1)</scope>
    <source>
        <strain>DBA</strain>
    </source>
</reference>
<reference key="4">
    <citation type="journal article" date="2004" name="Neurosci. Lett.">
        <title>Cloning and pharmacological characterization of mouse TRPV1.</title>
        <authorList>
            <person name="Correll C.C."/>
            <person name="Phelps P.T."/>
            <person name="Greenfeder S."/>
        </authorList>
    </citation>
    <scope>NUCLEOTIDE SEQUENCE [MRNA] (ISOFORM 1)</scope>
    <scope>FUNCTION</scope>
    <scope>SUBCELLULAR LOCATION</scope>
    <scope>TRANSPORTER ACTIVITY</scope>
    <source>
        <strain>Swiss Webster</strain>
    </source>
</reference>
<reference key="5">
    <citation type="journal article" date="2009" name="PLoS Biol.">
        <title>Lineage-specific biology revealed by a finished genome assembly of the mouse.</title>
        <authorList>
            <person name="Church D.M."/>
            <person name="Goodstadt L."/>
            <person name="Hillier L.W."/>
            <person name="Zody M.C."/>
            <person name="Goldstein S."/>
            <person name="She X."/>
            <person name="Bult C.J."/>
            <person name="Agarwala R."/>
            <person name="Cherry J.L."/>
            <person name="DiCuccio M."/>
            <person name="Hlavina W."/>
            <person name="Kapustin Y."/>
            <person name="Meric P."/>
            <person name="Maglott D."/>
            <person name="Birtle Z."/>
            <person name="Marques A.C."/>
            <person name="Graves T."/>
            <person name="Zhou S."/>
            <person name="Teague B."/>
            <person name="Potamousis K."/>
            <person name="Churas C."/>
            <person name="Place M."/>
            <person name="Herschleb J."/>
            <person name="Runnheim R."/>
            <person name="Forrest D."/>
            <person name="Amos-Landgraf J."/>
            <person name="Schwartz D.C."/>
            <person name="Cheng Z."/>
            <person name="Lindblad-Toh K."/>
            <person name="Eichler E.E."/>
            <person name="Ponting C.P."/>
        </authorList>
    </citation>
    <scope>NUCLEOTIDE SEQUENCE [LARGE SCALE GENOMIC DNA]</scope>
    <source>
        <strain>C57BL/6J</strain>
    </source>
</reference>
<reference key="6">
    <citation type="journal article" date="2000" name="Science">
        <title>Impaired nociception and pain sensation in mice lacking the capsaicin receptor.</title>
        <authorList>
            <person name="Caterina M.J."/>
            <person name="Leffler A."/>
            <person name="Malmberg A.B."/>
            <person name="Martin W.J."/>
            <person name="Trafton J."/>
            <person name="Petersen-Zeitz K.R."/>
            <person name="Koltzenburg M."/>
            <person name="Basbaum A.I."/>
            <person name="Julius D."/>
        </authorList>
    </citation>
    <scope>DISRUPTION PHENOTYPE</scope>
    <scope>FUNCTION</scope>
    <scope>TISSUE SPECIFICITY</scope>
</reference>
<reference key="7">
    <citation type="journal article" date="2008" name="Cell">
        <title>Pirt, a phosphoinositide-binding protein, functions as a regulatory subunit of TRPV1.</title>
        <authorList>
            <person name="Kim A.Y."/>
            <person name="Tang Z."/>
            <person name="Liu Q."/>
            <person name="Patel K.N."/>
            <person name="Maag D."/>
            <person name="Geng Y."/>
            <person name="Dong X."/>
        </authorList>
    </citation>
    <scope>ACTIVITY REGULATION</scope>
    <scope>SUBCELLULAR LOCATION</scope>
    <scope>INTERACTION WITH PIRT</scope>
</reference>
<reference key="8">
    <citation type="journal article" date="2015" name="Nat. Commun.">
        <title>A pain-inducing centipede toxin targets the heat activation machinery of nociceptor TRPV1.</title>
        <authorList>
            <person name="Yang S."/>
            <person name="Yang F."/>
            <person name="Wei N."/>
            <person name="Hong J."/>
            <person name="Li B."/>
            <person name="Luo L."/>
            <person name="Rong M."/>
            <person name="Yarov-Yarovoy V."/>
            <person name="Zheng J."/>
            <person name="Wang K."/>
            <person name="Lai R."/>
        </authorList>
    </citation>
    <scope>INTERACTION WITH THE SCOLOPENDRA MUTILANS RHTX TOXIN</scope>
    <scope>SUBUNIT</scope>
    <scope>MUTAGENESIS OF LEU-461; ASP-602; TYR-632 AND THR-634</scope>
</reference>
<reference key="9">
    <citation type="journal article" date="2015" name="Neuron">
        <title>Tmem100 Is a regulator of TRPA1-TRPV1 complex and contributes to persistent pain.</title>
        <authorList>
            <person name="Weng H.J."/>
            <person name="Patel K.N."/>
            <person name="Jeske N.A."/>
            <person name="Bierbower S.M."/>
            <person name="Zou W."/>
            <person name="Tiwari V."/>
            <person name="Zheng Q."/>
            <person name="Tang Z."/>
            <person name="Mo G.C."/>
            <person name="Wang Y."/>
            <person name="Geng Y."/>
            <person name="Zhang J."/>
            <person name="Guan Y."/>
            <person name="Akopian A.N."/>
            <person name="Dong X."/>
        </authorList>
    </citation>
    <scope>INTERACTION WITH TMEM100</scope>
</reference>
<accession>Q704Y3</accession>
<accession>Q5SSE1</accession>
<accession>Q5SSE2</accession>
<accession>Q5SSE4</accession>
<accession>Q5WPV5</accession>
<accession>Q68SW0</accession>
<evidence type="ECO:0000250" key="1">
    <source>
        <dbReference type="UniProtKB" id="O35433"/>
    </source>
</evidence>
<evidence type="ECO:0000250" key="2">
    <source>
        <dbReference type="UniProtKB" id="Q8NER1"/>
    </source>
</evidence>
<evidence type="ECO:0000250" key="3">
    <source>
        <dbReference type="UniProtKB" id="Q9R186"/>
    </source>
</evidence>
<evidence type="ECO:0000256" key="4">
    <source>
        <dbReference type="SAM" id="MobiDB-lite"/>
    </source>
</evidence>
<evidence type="ECO:0000269" key="5">
    <source>
    </source>
</evidence>
<evidence type="ECO:0000269" key="6">
    <source>
    </source>
</evidence>
<evidence type="ECO:0000269" key="7">
    <source>
    </source>
</evidence>
<evidence type="ECO:0000269" key="8">
    <source>
    </source>
</evidence>
<evidence type="ECO:0000269" key="9">
    <source>
    </source>
</evidence>
<evidence type="ECO:0000269" key="10">
    <source>
    </source>
</evidence>
<evidence type="ECO:0000303" key="11">
    <source>
    </source>
</evidence>
<evidence type="ECO:0000305" key="12"/>
<sequence length="839" mass="94976">MEKWASLDSDESEPPAQENSCPDPPDRDPNSKPPPAKPHIFATRSRTRLFGKGDSEEASPMDCPYEEGGLASCPIITVSSVVTLQRSVDGPTCLRQTSQDSVSTGVETPPRLYDRRSIFDAVAQSNCQELESLLSFLQKSKKRLTDSEFKDPETGKTCLLKAMLNLHNGQNDTIALLLDIARKTDSLKQFVNASYTDSYYKGQTALHIAIERRNMALVTLLVENGADVQAAANGDFFKKTKGRPGFYFGELPLSLAACTNQLAIVKFLLQNSWQPADISARDSVGNTVLHALVEVADNTADNTKFVTNMYNEILILGAKLHPTLKLEELTNKKGLTPLALAASSGKIGVLAYILQREIHEPECRHLSRKFTEWAYGPVHSSLYDLSCIDTCEKNSVLEVIAYSSSETPNRHDMLLVEPLNRLLQDKWDRFVKRIFYFNFFVYCLYMIIFTTAAYYRPVEGLPPYKLNNTVGDYFRVTGEILSVSGGVYFFFRGIQYFLQRRPSLKSLFVDSYSEILFFVQSLFMLVSVVLYFSHRKEYVASMVFSLAMGWTNMLYYTRGFQQMGIYAVMIEKMILRDLCRFMFVYLVFLFGFSTAVVTLIEDGKNNSLPVESPPHKCRGSACRPGNSYNSLYSTCLELFKFTIGMGDLEFTENYDFKAVFIILLLAYVILTYILLLNMLIALMGETVNKIAQESKNIWKLQRAITILDTEKSFLKCMRKAFRSGKLLQVGFTPDGKDDFRWCFRVDEVNWTTWNTNVGIINEDPGNCEGVKRTLSFSLRSGRVSGRNWKNFALVPLLRDASTRDRHSTQPEEVQLKHYTGSLKPEDAEVFKDSMAPGEK</sequence>
<proteinExistence type="evidence at protein level"/>
<dbReference type="EMBL" id="AY452083">
    <property type="protein sequence ID" value="AAS15574.1"/>
    <property type="molecule type" value="mRNA"/>
</dbReference>
<dbReference type="EMBL" id="AY452084">
    <property type="protein sequence ID" value="AAS15575.1"/>
    <property type="molecule type" value="mRNA"/>
</dbReference>
<dbReference type="EMBL" id="AJ620495">
    <property type="protein sequence ID" value="CAF05661.1"/>
    <property type="molecule type" value="mRNA"/>
</dbReference>
<dbReference type="EMBL" id="AB180097">
    <property type="protein sequence ID" value="BAD20301.1"/>
    <property type="molecule type" value="mRNA"/>
</dbReference>
<dbReference type="EMBL" id="AY445519">
    <property type="protein sequence ID" value="AAS01605.1"/>
    <property type="molecule type" value="mRNA"/>
</dbReference>
<dbReference type="EMBL" id="AL663116">
    <property type="protein sequence ID" value="CAI24577.1"/>
    <property type="status" value="ALT_SEQ"/>
    <property type="molecule type" value="Genomic_DNA"/>
</dbReference>
<dbReference type="EMBL" id="AL663116">
    <property type="protein sequence ID" value="CAI24578.1"/>
    <property type="molecule type" value="Genomic_DNA"/>
</dbReference>
<dbReference type="EMBL" id="AL663116">
    <property type="protein sequence ID" value="CAI24579.1"/>
    <property type="status" value="ALT_SEQ"/>
    <property type="molecule type" value="Genomic_DNA"/>
</dbReference>
<dbReference type="EMBL" id="AL663116">
    <property type="protein sequence ID" value="CAI24580.1"/>
    <property type="status" value="ALT_SEQ"/>
    <property type="molecule type" value="Genomic_DNA"/>
</dbReference>
<dbReference type="CCDS" id="CCDS25003.1">
    <molecule id="Q704Y3-1"/>
</dbReference>
<dbReference type="RefSeq" id="NP_001001445.1">
    <molecule id="Q704Y3-1"/>
    <property type="nucleotide sequence ID" value="NM_001001445.2"/>
</dbReference>
<dbReference type="SMR" id="Q704Y3"/>
<dbReference type="BioGRID" id="228724">
    <property type="interactions" value="126"/>
</dbReference>
<dbReference type="CORUM" id="Q704Y3"/>
<dbReference type="DIP" id="DIP-59791N"/>
<dbReference type="FunCoup" id="Q704Y3">
    <property type="interactions" value="482"/>
</dbReference>
<dbReference type="STRING" id="10090.ENSMUSP00000099585"/>
<dbReference type="BindingDB" id="Q704Y3"/>
<dbReference type="ChEMBL" id="CHEMBL1781864"/>
<dbReference type="DrugCentral" id="Q704Y3"/>
<dbReference type="GuidetoPHARMACOLOGY" id="507"/>
<dbReference type="GlyCosmos" id="Q704Y3">
    <property type="glycosylation" value="1 site, No reported glycans"/>
</dbReference>
<dbReference type="GlyGen" id="Q704Y3">
    <property type="glycosylation" value="1 site"/>
</dbReference>
<dbReference type="iPTMnet" id="Q704Y3"/>
<dbReference type="PhosphoSitePlus" id="Q704Y3"/>
<dbReference type="SwissPalm" id="Q704Y3"/>
<dbReference type="PaxDb" id="10090-ENSMUSP00000099585"/>
<dbReference type="ProteomicsDB" id="298316">
    <molecule id="Q704Y3-1"/>
</dbReference>
<dbReference type="ProteomicsDB" id="298317">
    <molecule id="Q704Y3-2"/>
</dbReference>
<dbReference type="ABCD" id="Q704Y3">
    <property type="antibodies" value="2 sequenced antibodies"/>
</dbReference>
<dbReference type="Antibodypedia" id="5472">
    <property type="antibodies" value="556 antibodies from 39 providers"/>
</dbReference>
<dbReference type="DNASU" id="193034"/>
<dbReference type="Ensembl" id="ENSMUST00000102526.9">
    <molecule id="Q704Y3-1"/>
    <property type="protein sequence ID" value="ENSMUSP00000099585.3"/>
    <property type="gene ID" value="ENSMUSG00000005952.16"/>
</dbReference>
<dbReference type="GeneID" id="193034"/>
<dbReference type="KEGG" id="mmu:193034"/>
<dbReference type="UCSC" id="uc007kah.2">
    <molecule id="Q704Y3-1"/>
    <property type="organism name" value="mouse"/>
</dbReference>
<dbReference type="UCSC" id="uc011xyq.2">
    <molecule id="Q704Y3-2"/>
    <property type="organism name" value="mouse"/>
</dbReference>
<dbReference type="AGR" id="MGI:1341787"/>
<dbReference type="CTD" id="7442"/>
<dbReference type="MGI" id="MGI:1341787">
    <property type="gene designation" value="Trpv1"/>
</dbReference>
<dbReference type="VEuPathDB" id="HostDB:ENSMUSG00000005952"/>
<dbReference type="eggNOG" id="KOG3676">
    <property type="taxonomic scope" value="Eukaryota"/>
</dbReference>
<dbReference type="GeneTree" id="ENSGT00940000160870"/>
<dbReference type="HOGENOM" id="CLU_012795_1_0_1"/>
<dbReference type="InParanoid" id="Q704Y3"/>
<dbReference type="OMA" id="KDNENIW"/>
<dbReference type="OrthoDB" id="533508at2759"/>
<dbReference type="PhylomeDB" id="Q704Y3"/>
<dbReference type="TreeFam" id="TF314711"/>
<dbReference type="Reactome" id="R-MMU-3295583">
    <property type="pathway name" value="TRP channels"/>
</dbReference>
<dbReference type="BioGRID-ORCS" id="193034">
    <property type="hits" value="2 hits in 79 CRISPR screens"/>
</dbReference>
<dbReference type="PRO" id="PR:Q704Y3"/>
<dbReference type="Proteomes" id="UP000000589">
    <property type="component" value="Chromosome 11"/>
</dbReference>
<dbReference type="RNAct" id="Q704Y3">
    <property type="molecule type" value="protein"/>
</dbReference>
<dbReference type="Bgee" id="ENSMUSG00000005952">
    <property type="expression patterns" value="Expressed in lumbar dorsal root ganglion and 54 other cell types or tissues"/>
</dbReference>
<dbReference type="ExpressionAtlas" id="Q704Y3">
    <property type="expression patterns" value="baseline and differential"/>
</dbReference>
<dbReference type="GO" id="GO:0032591">
    <property type="term" value="C:dendritic spine membrane"/>
    <property type="evidence" value="ECO:0007669"/>
    <property type="project" value="UniProtKB-SubCell"/>
</dbReference>
<dbReference type="GO" id="GO:0098982">
    <property type="term" value="C:GABA-ergic synapse"/>
    <property type="evidence" value="ECO:0000314"/>
    <property type="project" value="SynGO"/>
</dbReference>
<dbReference type="GO" id="GO:0016020">
    <property type="term" value="C:membrane"/>
    <property type="evidence" value="ECO:0000250"/>
    <property type="project" value="UniProtKB"/>
</dbReference>
<dbReference type="GO" id="GO:0043005">
    <property type="term" value="C:neuron projection"/>
    <property type="evidence" value="ECO:0000314"/>
    <property type="project" value="MGI"/>
</dbReference>
<dbReference type="GO" id="GO:0005886">
    <property type="term" value="C:plasma membrane"/>
    <property type="evidence" value="ECO:0000314"/>
    <property type="project" value="MGI"/>
</dbReference>
<dbReference type="GO" id="GO:0045211">
    <property type="term" value="C:postsynaptic membrane"/>
    <property type="evidence" value="ECO:0000314"/>
    <property type="project" value="SynGO"/>
</dbReference>
<dbReference type="GO" id="GO:0005524">
    <property type="term" value="F:ATP binding"/>
    <property type="evidence" value="ECO:0000250"/>
    <property type="project" value="UniProtKB"/>
</dbReference>
<dbReference type="GO" id="GO:0005262">
    <property type="term" value="F:calcium channel activity"/>
    <property type="evidence" value="ECO:0000314"/>
    <property type="project" value="UniProtKB"/>
</dbReference>
<dbReference type="GO" id="GO:0005516">
    <property type="term" value="F:calmodulin binding"/>
    <property type="evidence" value="ECO:0000250"/>
    <property type="project" value="UniProtKB"/>
</dbReference>
<dbReference type="GO" id="GO:0005231">
    <property type="term" value="F:excitatory extracellular ligand-gated monoatomic ion channel activity"/>
    <property type="evidence" value="ECO:0000250"/>
    <property type="project" value="UniProtKB"/>
</dbReference>
<dbReference type="GO" id="GO:0005230">
    <property type="term" value="F:extracellular ligand-gated monoatomic ion channel activity"/>
    <property type="evidence" value="ECO:0000250"/>
    <property type="project" value="UniProtKB"/>
</dbReference>
<dbReference type="GO" id="GO:0042802">
    <property type="term" value="F:identical protein binding"/>
    <property type="evidence" value="ECO:0000353"/>
    <property type="project" value="IntAct"/>
</dbReference>
<dbReference type="GO" id="GO:0015278">
    <property type="term" value="F:intracellularly gated calcium channel activity"/>
    <property type="evidence" value="ECO:0000250"/>
    <property type="project" value="UniProtKB"/>
</dbReference>
<dbReference type="GO" id="GO:0046872">
    <property type="term" value="F:metal ion binding"/>
    <property type="evidence" value="ECO:0007669"/>
    <property type="project" value="UniProtKB-KW"/>
</dbReference>
<dbReference type="GO" id="GO:0005261">
    <property type="term" value="F:monoatomic cation channel activity"/>
    <property type="evidence" value="ECO:0000247"/>
    <property type="project" value="MGI"/>
</dbReference>
<dbReference type="GO" id="GO:0008324">
    <property type="term" value="F:monoatomic cation transmembrane transporter activity"/>
    <property type="evidence" value="ECO:0000266"/>
    <property type="project" value="MGI"/>
</dbReference>
<dbReference type="GO" id="GO:0005216">
    <property type="term" value="F:monoatomic ion channel activity"/>
    <property type="evidence" value="ECO:0000314"/>
    <property type="project" value="MGI"/>
</dbReference>
<dbReference type="GO" id="GO:0035091">
    <property type="term" value="F:phosphatidylinositol binding"/>
    <property type="evidence" value="ECO:0000250"/>
    <property type="project" value="UniProtKB"/>
</dbReference>
<dbReference type="GO" id="GO:0051219">
    <property type="term" value="F:phosphoprotein binding"/>
    <property type="evidence" value="ECO:0007669"/>
    <property type="project" value="Ensembl"/>
</dbReference>
<dbReference type="GO" id="GO:0097603">
    <property type="term" value="F:temperature-gated ion channel activity"/>
    <property type="evidence" value="ECO:0000314"/>
    <property type="project" value="MGI"/>
</dbReference>
<dbReference type="GO" id="GO:0004888">
    <property type="term" value="F:transmembrane signaling receptor activity"/>
    <property type="evidence" value="ECO:0000250"/>
    <property type="project" value="UniProtKB"/>
</dbReference>
<dbReference type="GO" id="GO:0048266">
    <property type="term" value="P:behavioral response to pain"/>
    <property type="evidence" value="ECO:0000314"/>
    <property type="project" value="MGI"/>
</dbReference>
<dbReference type="GO" id="GO:0098703">
    <property type="term" value="P:calcium ion import across plasma membrane"/>
    <property type="evidence" value="ECO:0000250"/>
    <property type="project" value="UniProtKB"/>
</dbReference>
<dbReference type="GO" id="GO:0070588">
    <property type="term" value="P:calcium ion transmembrane transport"/>
    <property type="evidence" value="ECO:0000250"/>
    <property type="project" value="UniProtKB"/>
</dbReference>
<dbReference type="GO" id="GO:0006816">
    <property type="term" value="P:calcium ion transport"/>
    <property type="evidence" value="ECO:0000314"/>
    <property type="project" value="MGI"/>
</dbReference>
<dbReference type="GO" id="GO:0071468">
    <property type="term" value="P:cellular response to acidic pH"/>
    <property type="evidence" value="ECO:0000250"/>
    <property type="project" value="UniProtKB"/>
</dbReference>
<dbReference type="GO" id="GO:0071312">
    <property type="term" value="P:cellular response to alkaloid"/>
    <property type="evidence" value="ECO:0000250"/>
    <property type="project" value="UniProtKB"/>
</dbReference>
<dbReference type="GO" id="GO:0071318">
    <property type="term" value="P:cellular response to ATP"/>
    <property type="evidence" value="ECO:0000250"/>
    <property type="project" value="UniProtKB"/>
</dbReference>
<dbReference type="GO" id="GO:0034605">
    <property type="term" value="P:cellular response to heat"/>
    <property type="evidence" value="ECO:0000250"/>
    <property type="project" value="UniProtKB"/>
</dbReference>
<dbReference type="GO" id="GO:0050968">
    <property type="term" value="P:detection of chemical stimulus involved in sensory perception of pain"/>
    <property type="evidence" value="ECO:0000314"/>
    <property type="project" value="MGI"/>
</dbReference>
<dbReference type="GO" id="GO:0050965">
    <property type="term" value="P:detection of temperature stimulus involved in sensory perception of pain"/>
    <property type="evidence" value="ECO:0000315"/>
    <property type="project" value="UniProtKB"/>
</dbReference>
<dbReference type="GO" id="GO:0050960">
    <property type="term" value="P:detection of temperature stimulus involved in thermoception"/>
    <property type="evidence" value="ECO:0000314"/>
    <property type="project" value="MGI"/>
</dbReference>
<dbReference type="GO" id="GO:0002024">
    <property type="term" value="P:diet induced thermogenesis"/>
    <property type="evidence" value="ECO:0000315"/>
    <property type="project" value="MGI"/>
</dbReference>
<dbReference type="GO" id="GO:0001660">
    <property type="term" value="P:fever generation"/>
    <property type="evidence" value="ECO:0000315"/>
    <property type="project" value="MGI"/>
</dbReference>
<dbReference type="GO" id="GO:0006629">
    <property type="term" value="P:lipid metabolic process"/>
    <property type="evidence" value="ECO:0000315"/>
    <property type="project" value="MGI"/>
</dbReference>
<dbReference type="GO" id="GO:0006812">
    <property type="term" value="P:monoatomic cation transport"/>
    <property type="evidence" value="ECO:0000247"/>
    <property type="project" value="MGI"/>
</dbReference>
<dbReference type="GO" id="GO:0034220">
    <property type="term" value="P:monoatomic ion transmembrane transport"/>
    <property type="evidence" value="ECO:0000315"/>
    <property type="project" value="UniProtKB"/>
</dbReference>
<dbReference type="GO" id="GO:0000122">
    <property type="term" value="P:negative regulation of transcription by RNA polymerase II"/>
    <property type="evidence" value="ECO:0000315"/>
    <property type="project" value="UniProtKB"/>
</dbReference>
<dbReference type="GO" id="GO:0002790">
    <property type="term" value="P:peptide secretion"/>
    <property type="evidence" value="ECO:0000315"/>
    <property type="project" value="MGI"/>
</dbReference>
<dbReference type="GO" id="GO:0051289">
    <property type="term" value="P:protein homotetramerization"/>
    <property type="evidence" value="ECO:0000250"/>
    <property type="project" value="UniProtKB"/>
</dbReference>
<dbReference type="GO" id="GO:1901594">
    <property type="term" value="P:response to capsazepine"/>
    <property type="evidence" value="ECO:0000250"/>
    <property type="project" value="UniProtKB"/>
</dbReference>
<dbReference type="GO" id="GO:0009408">
    <property type="term" value="P:response to heat"/>
    <property type="evidence" value="ECO:0000315"/>
    <property type="project" value="MGI"/>
</dbReference>
<dbReference type="GO" id="GO:0048265">
    <property type="term" value="P:response to pain"/>
    <property type="evidence" value="ECO:0000314"/>
    <property type="project" value="MGI"/>
</dbReference>
<dbReference type="GO" id="GO:0009268">
    <property type="term" value="P:response to pH"/>
    <property type="evidence" value="ECO:0000315"/>
    <property type="project" value="MGI"/>
</dbReference>
<dbReference type="GO" id="GO:0050954">
    <property type="term" value="P:sensory perception of mechanical stimulus"/>
    <property type="evidence" value="ECO:0000315"/>
    <property type="project" value="MGI"/>
</dbReference>
<dbReference type="GO" id="GO:0019233">
    <property type="term" value="P:sensory perception of pain"/>
    <property type="evidence" value="ECO:0000315"/>
    <property type="project" value="MGI"/>
</dbReference>
<dbReference type="GO" id="GO:0050909">
    <property type="term" value="P:sensory perception of taste"/>
    <property type="evidence" value="ECO:0000315"/>
    <property type="project" value="MGI"/>
</dbReference>
<dbReference type="GO" id="GO:0060083">
    <property type="term" value="P:smooth muscle contraction involved in micturition"/>
    <property type="evidence" value="ECO:0000315"/>
    <property type="project" value="MGI"/>
</dbReference>
<dbReference type="GO" id="GO:0001659">
    <property type="term" value="P:temperature homeostasis"/>
    <property type="evidence" value="ECO:0000315"/>
    <property type="project" value="MGI"/>
</dbReference>
<dbReference type="GO" id="GO:0014832">
    <property type="term" value="P:urinary bladder smooth muscle contraction"/>
    <property type="evidence" value="ECO:0000315"/>
    <property type="project" value="MGI"/>
</dbReference>
<dbReference type="CDD" id="cd22196">
    <property type="entry name" value="TRPV1"/>
    <property type="match status" value="1"/>
</dbReference>
<dbReference type="FunFam" id="1.10.287.70:FF:000074">
    <property type="entry name" value="Transient receptor potential cation channel subfamily V member 1"/>
    <property type="match status" value="1"/>
</dbReference>
<dbReference type="FunFam" id="1.25.40.20:FF:000018">
    <property type="entry name" value="Transient receptor potential cation channel subfamily V member 1"/>
    <property type="match status" value="1"/>
</dbReference>
<dbReference type="Gene3D" id="1.10.287.70">
    <property type="match status" value="1"/>
</dbReference>
<dbReference type="Gene3D" id="1.25.40.20">
    <property type="entry name" value="Ankyrin repeat-containing domain"/>
    <property type="match status" value="1"/>
</dbReference>
<dbReference type="InterPro" id="IPR002110">
    <property type="entry name" value="Ankyrin_rpt"/>
</dbReference>
<dbReference type="InterPro" id="IPR036770">
    <property type="entry name" value="Ankyrin_rpt-contain_sf"/>
</dbReference>
<dbReference type="InterPro" id="IPR005821">
    <property type="entry name" value="Ion_trans_dom"/>
</dbReference>
<dbReference type="InterPro" id="IPR024862">
    <property type="entry name" value="TRPV"/>
</dbReference>
<dbReference type="InterPro" id="IPR008347">
    <property type="entry name" value="TrpV1-4"/>
</dbReference>
<dbReference type="NCBIfam" id="TIGR00870">
    <property type="entry name" value="trp"/>
    <property type="match status" value="1"/>
</dbReference>
<dbReference type="PANTHER" id="PTHR10582:SF17">
    <property type="entry name" value="TRANSIENT RECEPTOR POTENTIAL CATION CHANNEL SUBFAMILY V MEMBER 1"/>
    <property type="match status" value="1"/>
</dbReference>
<dbReference type="PANTHER" id="PTHR10582">
    <property type="entry name" value="TRANSIENT RECEPTOR POTENTIAL ION CHANNEL PROTEIN"/>
    <property type="match status" value="1"/>
</dbReference>
<dbReference type="Pfam" id="PF00023">
    <property type="entry name" value="Ank"/>
    <property type="match status" value="1"/>
</dbReference>
<dbReference type="Pfam" id="PF12796">
    <property type="entry name" value="Ank_2"/>
    <property type="match status" value="1"/>
</dbReference>
<dbReference type="Pfam" id="PF00520">
    <property type="entry name" value="Ion_trans"/>
    <property type="match status" value="1"/>
</dbReference>
<dbReference type="PRINTS" id="PR01768">
    <property type="entry name" value="TRPVRECEPTOR"/>
</dbReference>
<dbReference type="SMART" id="SM00248">
    <property type="entry name" value="ANK"/>
    <property type="match status" value="4"/>
</dbReference>
<dbReference type="SUPFAM" id="SSF48403">
    <property type="entry name" value="Ankyrin repeat"/>
    <property type="match status" value="1"/>
</dbReference>
<dbReference type="PROSITE" id="PS50297">
    <property type="entry name" value="ANK_REP_REGION"/>
    <property type="match status" value="1"/>
</dbReference>
<dbReference type="PROSITE" id="PS50088">
    <property type="entry name" value="ANK_REPEAT"/>
    <property type="match status" value="1"/>
</dbReference>
<keyword id="KW-0025">Alternative splicing</keyword>
<keyword id="KW-0040">ANK repeat</keyword>
<keyword id="KW-0067">ATP-binding</keyword>
<keyword id="KW-0106">Calcium</keyword>
<keyword id="KW-0107">Calcium channel</keyword>
<keyword id="KW-0109">Calcium transport</keyword>
<keyword id="KW-0112">Calmodulin-binding</keyword>
<keyword id="KW-1003">Cell membrane</keyword>
<keyword id="KW-0966">Cell projection</keyword>
<keyword id="KW-0325">Glycoprotein</keyword>
<keyword id="KW-0407">Ion channel</keyword>
<keyword id="KW-0406">Ion transport</keyword>
<keyword id="KW-0472">Membrane</keyword>
<keyword id="KW-0479">Metal-binding</keyword>
<keyword id="KW-0547">Nucleotide-binding</keyword>
<keyword id="KW-0597">Phosphoprotein</keyword>
<keyword id="KW-0628">Postsynaptic cell membrane</keyword>
<keyword id="KW-1185">Reference proteome</keyword>
<keyword id="KW-0677">Repeat</keyword>
<keyword id="KW-0915">Sodium</keyword>
<keyword id="KW-0770">Synapse</keyword>
<keyword id="KW-0812">Transmembrane</keyword>
<keyword id="KW-1133">Transmembrane helix</keyword>
<keyword id="KW-0813">Transport</keyword>
<protein>
    <recommendedName>
        <fullName>Transient receptor potential cation channel subfamily V member 1</fullName>
        <shortName>TrpV1</shortName>
    </recommendedName>
    <alternativeName>
        <fullName>Osm-9-like TRP channel 1</fullName>
        <shortName>OTRPC1</shortName>
    </alternativeName>
    <alternativeName>
        <fullName>Vanilloid receptor 1</fullName>
    </alternativeName>
</protein>
<comment type="function">
    <text evidence="1 5 6 7">Non-selective calcium permeant cation channel involved in detection of noxious chemical and thermal stimuli (PubMed:15194687, PubMed:15489017). Seems to mediate proton influx and may be involved in intracellular acidosis in nociceptive neurons. Involved in mediation of inflammatory pain and hyperalgesia (PubMed:10764638). Sensitized by a phosphatidylinositol second messenger system activated by receptor tyrosine kinases, which involves PKC isozymes and PCL. Activation by vanilloids, like capsaicin, and temperatures higher than 42 degrees Celsius (By similarity). Upon activation, exhibits a time- and Ca(2+)-dependent outward rectification, followed by a long-lasting refractory state. Mild extracellular acidic pH (6.5) potentiates channel activation by noxious heat and vanilloids, whereas acidic conditions (pH &lt;6) directly activate the channel. Can be activated by endogenous compounds, including 12-hydroperoxytetraenoic acid and bradykinin. Acts as ionotropic endocannabinoid receptor with central neuromodulatory effects. Triggers a form of long-term depression (TRPV1-LTD) mediated by the endocannabinoid anandamine in the hippocampus and nucleus accumbens by affecting AMPA receptors endocytosis (By similarity).</text>
</comment>
<comment type="catalytic activity">
    <reaction evidence="6 7">
        <text>Ca(2+)(in) = Ca(2+)(out)</text>
        <dbReference type="Rhea" id="RHEA:29671"/>
        <dbReference type="ChEBI" id="CHEBI:29108"/>
    </reaction>
</comment>
<comment type="catalytic activity">
    <reaction evidence="1">
        <text>Mg(2+)(in) = Mg(2+)(out)</text>
        <dbReference type="Rhea" id="RHEA:29827"/>
        <dbReference type="ChEBI" id="CHEBI:18420"/>
    </reaction>
</comment>
<comment type="catalytic activity">
    <reaction evidence="1">
        <text>Na(+)(in) = Na(+)(out)</text>
        <dbReference type="Rhea" id="RHEA:34963"/>
        <dbReference type="ChEBI" id="CHEBI:29101"/>
    </reaction>
</comment>
<comment type="catalytic activity">
    <reaction evidence="1">
        <text>K(+)(in) = K(+)(out)</text>
        <dbReference type="Rhea" id="RHEA:29463"/>
        <dbReference type="ChEBI" id="CHEBI:29103"/>
    </reaction>
</comment>
<comment type="activity regulation">
    <text evidence="1 10">The channel is sensitized by ATP binding. Repeated stimulation with capsaicin gives rise to progressively smaller responses, due to desensitization. This desensitization is triggered by the influx of calcium ions and is inhibited by elevated ATP levels. Ca(2+) and CALM displace ATP from its binding site and trigger a conformation change that leads to a closed, desensitized channel. The double-knot toxin (DkTx) from the Chinese earth tiger tarantula activates the channel and traps it in an open conformation (By similarity). The Scolopendra mutilans RhTx toxin potentiates the heat activation pathway mediated by this channel by binding to the charge-rich outer pore region (in an activated state) (PubMed:26420335). Channel activity is activated via the interaction with PIRT and phosphatidylinositol 4,5-bisphosphate (PIP2). Both PIRT and PIP2 are required to activate channel activity. Intracellular PIP2 inhibits desensitization (By similarity).</text>
</comment>
<comment type="subunit">
    <text evidence="1 2 8 9 10">Homotetramer (By similarity). May also form a heteromeric channel with TRPV3 (By similarity). Interacts with CALM, PRKCM and CSK (By similarity). Interacts with PRKCG and NTRK1, probably by forming a trimeric complex (By similarity). Interacts with PIRT (PubMed:18455988). Interacts with the Scolopendra mutilans RhTx toxin (PubMed:26420335). Interacts with TMEM100 (PubMed:25640077). Interacts with PACS2 (By similarity).</text>
</comment>
<comment type="interaction">
    <interactant intactId="EBI-15845376">
        <id>Q704Y3-1</id>
    </interactant>
    <interactant intactId="EBI-15845376">
        <id>Q704Y3-1</id>
        <label>Trpv1</label>
    </interactant>
    <organismsDiffer>false</organismsDiffer>
    <experiments>5</experiments>
</comment>
<comment type="subcellular location">
    <subcellularLocation>
        <location evidence="1">Postsynaptic cell membrane</location>
        <topology evidence="1">Multi-pass membrane protein</topology>
    </subcellularLocation>
    <subcellularLocation>
        <location evidence="1">Cell projection</location>
        <location evidence="1">Dendritic spine membrane</location>
        <topology evidence="1">Multi-pass membrane protein</topology>
    </subcellularLocation>
    <subcellularLocation>
        <location evidence="1">Cell membrane</location>
        <topology evidence="1">Multi-pass membrane protein</topology>
    </subcellularLocation>
    <text evidence="1">Mostly, but not exclusively expressed in postsynaptic dendritic spines.</text>
</comment>
<comment type="alternative products">
    <event type="alternative splicing"/>
    <isoform>
        <id>Q704Y3-1</id>
        <name>1</name>
        <name>Alpha</name>
        <sequence type="displayed"/>
    </isoform>
    <isoform>
        <id>Q704Y3-2</id>
        <name>2</name>
        <name>Beta</name>
        <sequence type="described" ref="VSP_013430"/>
    </isoform>
</comment>
<comment type="tissue specificity">
    <text evidence="5">Detected in neurons in the root ganglia (at protein level). Detected in dorsal root ganglia.</text>
</comment>
<comment type="domain">
    <text evidence="1">The association domain (AD) is necessary for self-association.</text>
</comment>
<comment type="PTM">
    <text evidence="1">Phosphorylation by PKA reverses capsaicin-induced dephosphorylation at multiple sites probably including Ser-117 as a major phosphorylation site. Phosphorylation by CAMKII seems to regulate binding to vanilloids. Phosphorylated and modulated by PRKCE, PRKCM and probably PRKCZ. Dephosphorylation by calcineurin seems to lead to receptor desensitization and phosphorylation by CAMKII recovers activity.</text>
</comment>
<comment type="disruption phenotype">
    <text evidence="5">Mice are viable and fertile, but lack behavorial and physiological responses to capsaicin and show impaired responses to noxious heat stimuli. Their dorsal root ganglion neurons do not display calcium channel activation in response to capsaicin or resiniferatoxin. Likewise, their dorsal root ganglion neurons do not display calcium channel activitation in response to low extracellular pH.</text>
</comment>
<comment type="similarity">
    <text evidence="12">Belongs to the transient receptor (TC 1.A.4) family. TrpV subfamily. TRPV1 sub-subfamily.</text>
</comment>
<comment type="sequence caution" evidence="12">
    <conflict type="erroneous gene model prediction">
        <sequence resource="EMBL-CDS" id="CAI24577"/>
    </conflict>
</comment>
<comment type="sequence caution" evidence="12">
    <conflict type="erroneous gene model prediction">
        <sequence resource="EMBL-CDS" id="CAI24579"/>
    </conflict>
</comment>
<comment type="sequence caution" evidence="12">
    <conflict type="erroneous gene model prediction">
        <sequence resource="EMBL-CDS" id="CAI24580"/>
    </conflict>
</comment>
<organism>
    <name type="scientific">Mus musculus</name>
    <name type="common">Mouse</name>
    <dbReference type="NCBI Taxonomy" id="10090"/>
    <lineage>
        <taxon>Eukaryota</taxon>
        <taxon>Metazoa</taxon>
        <taxon>Chordata</taxon>
        <taxon>Craniata</taxon>
        <taxon>Vertebrata</taxon>
        <taxon>Euteleostomi</taxon>
        <taxon>Mammalia</taxon>
        <taxon>Eutheria</taxon>
        <taxon>Euarchontoglires</taxon>
        <taxon>Glires</taxon>
        <taxon>Rodentia</taxon>
        <taxon>Myomorpha</taxon>
        <taxon>Muroidea</taxon>
        <taxon>Muridae</taxon>
        <taxon>Murinae</taxon>
        <taxon>Mus</taxon>
        <taxon>Mus</taxon>
    </lineage>
</organism>
<feature type="chain" id="PRO_0000215339" description="Transient receptor potential cation channel subfamily V member 1">
    <location>
        <begin position="1"/>
        <end position="839"/>
    </location>
</feature>
<feature type="topological domain" description="Cytoplasmic" evidence="2">
    <location>
        <begin position="1"/>
        <end position="433"/>
    </location>
</feature>
<feature type="transmembrane region" description="Helical; Name=S1" evidence="2">
    <location>
        <begin position="434"/>
        <end position="455"/>
    </location>
</feature>
<feature type="topological domain" description="Extracellular" evidence="2">
    <location>
        <begin position="456"/>
        <end position="472"/>
    </location>
</feature>
<feature type="transmembrane region" description="Helical; Name=S2" evidence="2">
    <location>
        <begin position="473"/>
        <end position="497"/>
    </location>
</feature>
<feature type="topological domain" description="Cytoplasmic" evidence="2">
    <location>
        <begin position="498"/>
        <end position="510"/>
    </location>
</feature>
<feature type="transmembrane region" description="Helical; Name=S3" evidence="2">
    <location>
        <begin position="511"/>
        <end position="532"/>
    </location>
</feature>
<feature type="topological domain" description="Extracellular" evidence="2">
    <location>
        <begin position="533"/>
        <end position="535"/>
    </location>
</feature>
<feature type="transmembrane region" description="Helical; Name=S4" evidence="2">
    <location>
        <begin position="536"/>
        <end position="556"/>
    </location>
</feature>
<feature type="topological domain" description="Cytoplasmic" evidence="2">
    <location>
        <begin position="557"/>
        <end position="559"/>
    </location>
</feature>
<feature type="transmembrane region" description="Helical; Name=S5" evidence="2">
    <location>
        <begin position="560"/>
        <end position="598"/>
    </location>
</feature>
<feature type="topological domain" description="Extracellular" evidence="2">
    <location>
        <begin position="599"/>
        <end position="630"/>
    </location>
</feature>
<feature type="intramembrane region" description="Pore-forming" evidence="2">
    <location>
        <begin position="631"/>
        <end position="652"/>
    </location>
</feature>
<feature type="topological domain" description="Extracellular" evidence="2">
    <location>
        <begin position="653"/>
        <end position="656"/>
    </location>
</feature>
<feature type="transmembrane region" description="Helical; Name=S6" evidence="2">
    <location>
        <begin position="657"/>
        <end position="683"/>
    </location>
</feature>
<feature type="topological domain" description="Cytoplasmic" evidence="2">
    <location>
        <begin position="684"/>
        <end position="839"/>
    </location>
</feature>
<feature type="repeat" description="ANK 1" evidence="2">
    <location>
        <begin position="111"/>
        <end position="139"/>
    </location>
</feature>
<feature type="repeat" description="ANK 2" evidence="2">
    <location>
        <begin position="154"/>
        <end position="186"/>
    </location>
</feature>
<feature type="repeat" description="ANK 3" evidence="2">
    <location>
        <begin position="204"/>
        <end position="229"/>
    </location>
</feature>
<feature type="repeat" description="ANK 4" evidence="2">
    <location>
        <begin position="250"/>
        <end position="277"/>
    </location>
</feature>
<feature type="repeat" description="ANK 5" evidence="2">
    <location>
        <begin position="286"/>
        <end position="322"/>
    </location>
</feature>
<feature type="repeat" description="ANK 6" evidence="2">
    <location>
        <begin position="336"/>
        <end position="359"/>
    </location>
</feature>
<feature type="repeat" description="ANK 7" evidence="2">
    <location>
        <begin position="394"/>
        <end position="416"/>
    </location>
</feature>
<feature type="region of interest" description="Disordered" evidence="4">
    <location>
        <begin position="1"/>
        <end position="60"/>
    </location>
</feature>
<feature type="region of interest" description="AD" evidence="1">
    <location>
        <begin position="685"/>
        <end position="713"/>
    </location>
</feature>
<feature type="region of interest" description="Interaction with calmodulin" evidence="1">
    <location>
        <begin position="768"/>
        <end position="802"/>
    </location>
</feature>
<feature type="region of interest" description="Required for PIP2-mediated channel inhibition" evidence="1">
    <location>
        <begin position="778"/>
        <end position="793"/>
    </location>
</feature>
<feature type="region of interest" description="Disordered" evidence="4">
    <location>
        <begin position="802"/>
        <end position="839"/>
    </location>
</feature>
<feature type="short sequence motif" description="Selectivity filter" evidence="1">
    <location>
        <begin position="644"/>
        <end position="647"/>
    </location>
</feature>
<feature type="compositionally biased region" description="Basic and acidic residues" evidence="4">
    <location>
        <begin position="802"/>
        <end position="815"/>
    </location>
</feature>
<feature type="compositionally biased region" description="Basic and acidic residues" evidence="4">
    <location>
        <begin position="823"/>
        <end position="839"/>
    </location>
</feature>
<feature type="binding site" evidence="1">
    <location>
        <position position="116"/>
    </location>
    <ligand>
        <name>ATP</name>
        <dbReference type="ChEBI" id="CHEBI:30616"/>
    </ligand>
</feature>
<feature type="binding site" evidence="1">
    <location>
        <position position="156"/>
    </location>
    <ligand>
        <name>ATP</name>
        <dbReference type="ChEBI" id="CHEBI:30616"/>
    </ligand>
</feature>
<feature type="binding site" evidence="1">
    <location>
        <position position="161"/>
    </location>
    <ligand>
        <name>ATP</name>
        <dbReference type="ChEBI" id="CHEBI:30616"/>
    </ligand>
</feature>
<feature type="binding site" evidence="1">
    <location>
        <position position="165"/>
    </location>
    <ligand>
        <name>ATP</name>
        <dbReference type="ChEBI" id="CHEBI:30616"/>
    </ligand>
</feature>
<feature type="binding site" evidence="1">
    <location>
        <begin position="200"/>
        <end position="203"/>
    </location>
    <ligand>
        <name>ATP</name>
        <dbReference type="ChEBI" id="CHEBI:30616"/>
    </ligand>
</feature>
<feature type="binding site" evidence="1">
    <location>
        <begin position="211"/>
        <end position="212"/>
    </location>
    <ligand>
        <name>ATP</name>
        <dbReference type="ChEBI" id="CHEBI:30616"/>
    </ligand>
</feature>
<feature type="binding site" evidence="1">
    <location>
        <begin position="512"/>
        <end position="513"/>
    </location>
    <ligand>
        <name>resiniferatoxin</name>
        <dbReference type="ChEBI" id="CHEBI:8809"/>
        <note>agonist</note>
    </ligand>
</feature>
<feature type="binding site" evidence="1">
    <location>
        <position position="551"/>
    </location>
    <ligand>
        <name>resiniferatoxin</name>
        <dbReference type="ChEBI" id="CHEBI:8809"/>
        <note>agonist</note>
    </ligand>
</feature>
<feature type="binding site" evidence="1">
    <location>
        <position position="558"/>
    </location>
    <ligand>
        <name>resiniferatoxin</name>
        <dbReference type="ChEBI" id="CHEBI:8809"/>
        <note>agonist</note>
    </ligand>
</feature>
<feature type="binding site" evidence="2">
    <location>
        <position position="644"/>
    </location>
    <ligand>
        <name>Na(+)</name>
        <dbReference type="ChEBI" id="CHEBI:29101"/>
        <label>1</label>
        <note>ligand shared among four neighboring subunits</note>
    </ligand>
</feature>
<feature type="binding site" evidence="2">
    <location>
        <position position="644"/>
    </location>
    <ligand>
        <name>Na(+)</name>
        <dbReference type="ChEBI" id="CHEBI:29101"/>
        <label>2</label>
        <note>ligand shared among four neighboring subunits</note>
    </ligand>
</feature>
<feature type="binding site" evidence="3">
    <location>
        <position position="647"/>
    </location>
    <ligand>
        <name>Ca(2+)</name>
        <dbReference type="ChEBI" id="CHEBI:29108"/>
        <note>ligand shared between two neighboring subunits</note>
    </ligand>
</feature>
<feature type="modified residue" description="Phosphoserine; by PKA and PKD" evidence="1">
    <location>
        <position position="117"/>
    </location>
</feature>
<feature type="modified residue" description="Phosphothreonine; by PKA; in vitro" evidence="1">
    <location>
        <position position="145"/>
    </location>
</feature>
<feature type="modified residue" description="Phosphothreonine; by PKA; in vitro" evidence="1">
    <location>
        <position position="371"/>
    </location>
</feature>
<feature type="modified residue" description="Phosphoserine; by PKC/PRKCE" evidence="1">
    <location>
        <position position="503"/>
    </location>
</feature>
<feature type="modified residue" description="Phosphothreonine" evidence="1">
    <location>
        <position position="705"/>
    </location>
</feature>
<feature type="modified residue" description="Phosphoserine" evidence="1">
    <location>
        <position position="775"/>
    </location>
</feature>
<feature type="modified residue" description="Phosphoserine; by PKC/PRKCE and PKC/PRKCZ" evidence="1">
    <location>
        <position position="801"/>
    </location>
</feature>
<feature type="modified residue" description="Phosphoserine" evidence="1">
    <location>
        <position position="821"/>
    </location>
</feature>
<feature type="glycosylation site" description="N-linked (GlcNAc...) asparagine" evidence="1">
    <location>
        <position position="605"/>
    </location>
</feature>
<feature type="splice variant" id="VSP_013430" description="In isoform 2." evidence="11">
    <location>
        <begin position="399"/>
        <end position="408"/>
    </location>
</feature>
<feature type="mutagenesis site" description="17-fold less potently activated by the Scolopendra mutilans RhTx toxin." evidence="10">
    <original>L</original>
    <variation>G</variation>
    <location>
        <position position="461"/>
    </location>
</feature>
<feature type="mutagenesis site" description="13-fold less potently activated by the Scolopendra mutilans RhTx toxin." evidence="10">
    <original>D</original>
    <variation>A</variation>
    <location>
        <position position="602"/>
    </location>
</feature>
<feature type="mutagenesis site" description="10-fold less potently activated by the Scolopendra mutilans RhTx toxin." evidence="10">
    <original>Y</original>
    <variation>A</variation>
    <location>
        <position position="632"/>
    </location>
</feature>
<feature type="mutagenesis site" description="8-fold less potently activated by the Scolopendra mutilans RhTx toxin." evidence="10">
    <original>T</original>
    <variation>A</variation>
    <location>
        <position position="634"/>
    </location>
</feature>
<feature type="sequence conflict" description="In Ref. 4; AAS01605." evidence="12" ref="4">
    <original>D</original>
    <variation>E</variation>
    <location>
        <position position="734"/>
    </location>
</feature>
<name>TRPV1_MOUSE</name>
<gene>
    <name type="primary">Trpv1</name>
</gene>